<accession>B2THL1</accession>
<sequence>MLKDLFKKSKYATVNPSAYKSKVVEEKPNIPSGMWTKCSNCNNMIYYEDLENNKYVCTKCNQHFRISPKERIKQIFDKDTFKEMWKSLKTNNPIDFEDYEEKINQSQSNTGSKEAVVTGVGRINDLEVACAIMDSFFMMGSMGTVVGEKITRIVEYATENNLPILIFTASGGARMQEGIFSLMQMAKISAALARHDEKGLLYITILTDPTTGGVTASFAMEGDIILSEPNTLVGFAGRRVIENTINETLPESFQKSEFLLEKGFIDSIVERKNMRAYLYKILILHGVNKYE</sequence>
<keyword id="KW-0067">ATP-binding</keyword>
<keyword id="KW-0963">Cytoplasm</keyword>
<keyword id="KW-0275">Fatty acid biosynthesis</keyword>
<keyword id="KW-0276">Fatty acid metabolism</keyword>
<keyword id="KW-0444">Lipid biosynthesis</keyword>
<keyword id="KW-0443">Lipid metabolism</keyword>
<keyword id="KW-0479">Metal-binding</keyword>
<keyword id="KW-0547">Nucleotide-binding</keyword>
<keyword id="KW-0808">Transferase</keyword>
<keyword id="KW-0862">Zinc</keyword>
<keyword id="KW-0863">Zinc-finger</keyword>
<organism>
    <name type="scientific">Clostridium botulinum (strain Eklund 17B / Type B)</name>
    <dbReference type="NCBI Taxonomy" id="935198"/>
    <lineage>
        <taxon>Bacteria</taxon>
        <taxon>Bacillati</taxon>
        <taxon>Bacillota</taxon>
        <taxon>Clostridia</taxon>
        <taxon>Eubacteriales</taxon>
        <taxon>Clostridiaceae</taxon>
        <taxon>Clostridium</taxon>
    </lineage>
</organism>
<proteinExistence type="inferred from homology"/>
<gene>
    <name evidence="1" type="primary">accD</name>
    <name type="ordered locus">CLL_A1155</name>
</gene>
<feature type="chain" id="PRO_0000358968" description="Acetyl-coenzyme A carboxylase carboxyl transferase subunit beta">
    <location>
        <begin position="1"/>
        <end position="291"/>
    </location>
</feature>
<feature type="domain" description="CoA carboxyltransferase N-terminal" evidence="2">
    <location>
        <begin position="34"/>
        <end position="291"/>
    </location>
</feature>
<feature type="zinc finger region" description="C4-type" evidence="1">
    <location>
        <begin position="38"/>
        <end position="60"/>
    </location>
</feature>
<feature type="binding site" evidence="1">
    <location>
        <position position="38"/>
    </location>
    <ligand>
        <name>Zn(2+)</name>
        <dbReference type="ChEBI" id="CHEBI:29105"/>
    </ligand>
</feature>
<feature type="binding site" evidence="1">
    <location>
        <position position="41"/>
    </location>
    <ligand>
        <name>Zn(2+)</name>
        <dbReference type="ChEBI" id="CHEBI:29105"/>
    </ligand>
</feature>
<feature type="binding site" evidence="1">
    <location>
        <position position="57"/>
    </location>
    <ligand>
        <name>Zn(2+)</name>
        <dbReference type="ChEBI" id="CHEBI:29105"/>
    </ligand>
</feature>
<feature type="binding site" evidence="1">
    <location>
        <position position="60"/>
    </location>
    <ligand>
        <name>Zn(2+)</name>
        <dbReference type="ChEBI" id="CHEBI:29105"/>
    </ligand>
</feature>
<dbReference type="EC" id="2.1.3.15" evidence="1"/>
<dbReference type="EMBL" id="CP001056">
    <property type="protein sequence ID" value="ACD23491.1"/>
    <property type="molecule type" value="Genomic_DNA"/>
</dbReference>
<dbReference type="SMR" id="B2THL1"/>
<dbReference type="KEGG" id="cbk:CLL_A1155"/>
<dbReference type="PATRIC" id="fig|935198.13.peg.1101"/>
<dbReference type="HOGENOM" id="CLU_015486_1_1_9"/>
<dbReference type="UniPathway" id="UPA00655">
    <property type="reaction ID" value="UER00711"/>
</dbReference>
<dbReference type="Proteomes" id="UP000001195">
    <property type="component" value="Chromosome"/>
</dbReference>
<dbReference type="GO" id="GO:0009317">
    <property type="term" value="C:acetyl-CoA carboxylase complex"/>
    <property type="evidence" value="ECO:0007669"/>
    <property type="project" value="InterPro"/>
</dbReference>
<dbReference type="GO" id="GO:0003989">
    <property type="term" value="F:acetyl-CoA carboxylase activity"/>
    <property type="evidence" value="ECO:0007669"/>
    <property type="project" value="InterPro"/>
</dbReference>
<dbReference type="GO" id="GO:0005524">
    <property type="term" value="F:ATP binding"/>
    <property type="evidence" value="ECO:0007669"/>
    <property type="project" value="UniProtKB-KW"/>
</dbReference>
<dbReference type="GO" id="GO:0016743">
    <property type="term" value="F:carboxyl- or carbamoyltransferase activity"/>
    <property type="evidence" value="ECO:0007669"/>
    <property type="project" value="UniProtKB-UniRule"/>
</dbReference>
<dbReference type="GO" id="GO:0008270">
    <property type="term" value="F:zinc ion binding"/>
    <property type="evidence" value="ECO:0007669"/>
    <property type="project" value="UniProtKB-UniRule"/>
</dbReference>
<dbReference type="GO" id="GO:0006633">
    <property type="term" value="P:fatty acid biosynthetic process"/>
    <property type="evidence" value="ECO:0007669"/>
    <property type="project" value="UniProtKB-KW"/>
</dbReference>
<dbReference type="GO" id="GO:2001295">
    <property type="term" value="P:malonyl-CoA biosynthetic process"/>
    <property type="evidence" value="ECO:0007669"/>
    <property type="project" value="UniProtKB-UniRule"/>
</dbReference>
<dbReference type="Gene3D" id="3.90.226.10">
    <property type="entry name" value="2-enoyl-CoA Hydratase, Chain A, domain 1"/>
    <property type="match status" value="1"/>
</dbReference>
<dbReference type="HAMAP" id="MF_01395">
    <property type="entry name" value="AcetylCoA_CT_beta"/>
    <property type="match status" value="1"/>
</dbReference>
<dbReference type="InterPro" id="IPR034733">
    <property type="entry name" value="AcCoA_carboxyl_beta"/>
</dbReference>
<dbReference type="InterPro" id="IPR000438">
    <property type="entry name" value="Acetyl_CoA_COase_Trfase_b_su"/>
</dbReference>
<dbReference type="InterPro" id="IPR029045">
    <property type="entry name" value="ClpP/crotonase-like_dom_sf"/>
</dbReference>
<dbReference type="InterPro" id="IPR011762">
    <property type="entry name" value="COA_CT_N"/>
</dbReference>
<dbReference type="InterPro" id="IPR041010">
    <property type="entry name" value="Znf-ACC"/>
</dbReference>
<dbReference type="NCBIfam" id="TIGR00515">
    <property type="entry name" value="accD"/>
    <property type="match status" value="1"/>
</dbReference>
<dbReference type="PANTHER" id="PTHR42995">
    <property type="entry name" value="ACETYL-COENZYME A CARBOXYLASE CARBOXYL TRANSFERASE SUBUNIT BETA, CHLOROPLASTIC"/>
    <property type="match status" value="1"/>
</dbReference>
<dbReference type="PANTHER" id="PTHR42995:SF5">
    <property type="entry name" value="ACETYL-COENZYME A CARBOXYLASE CARBOXYL TRANSFERASE SUBUNIT BETA, CHLOROPLASTIC"/>
    <property type="match status" value="1"/>
</dbReference>
<dbReference type="Pfam" id="PF01039">
    <property type="entry name" value="Carboxyl_trans"/>
    <property type="match status" value="1"/>
</dbReference>
<dbReference type="Pfam" id="PF17848">
    <property type="entry name" value="Zn_ribbon_ACC"/>
    <property type="match status" value="1"/>
</dbReference>
<dbReference type="PRINTS" id="PR01070">
    <property type="entry name" value="ACCCTRFRASEB"/>
</dbReference>
<dbReference type="SUPFAM" id="SSF52096">
    <property type="entry name" value="ClpP/crotonase"/>
    <property type="match status" value="1"/>
</dbReference>
<dbReference type="PROSITE" id="PS50980">
    <property type="entry name" value="COA_CT_NTER"/>
    <property type="match status" value="1"/>
</dbReference>
<protein>
    <recommendedName>
        <fullName evidence="1">Acetyl-coenzyme A carboxylase carboxyl transferase subunit beta</fullName>
        <shortName evidence="1">ACCase subunit beta</shortName>
        <shortName evidence="1">Acetyl-CoA carboxylase carboxyltransferase subunit beta</shortName>
        <ecNumber evidence="1">2.1.3.15</ecNumber>
    </recommendedName>
</protein>
<name>ACCD_CLOBB</name>
<evidence type="ECO:0000255" key="1">
    <source>
        <dbReference type="HAMAP-Rule" id="MF_01395"/>
    </source>
</evidence>
<evidence type="ECO:0000255" key="2">
    <source>
        <dbReference type="PROSITE-ProRule" id="PRU01136"/>
    </source>
</evidence>
<comment type="function">
    <text evidence="1">Component of the acetyl coenzyme A carboxylase (ACC) complex. Biotin carboxylase (BC) catalyzes the carboxylation of biotin on its carrier protein (BCCP) and then the CO(2) group is transferred by the transcarboxylase to acetyl-CoA to form malonyl-CoA.</text>
</comment>
<comment type="catalytic activity">
    <reaction evidence="1">
        <text>N(6)-carboxybiotinyl-L-lysyl-[protein] + acetyl-CoA = N(6)-biotinyl-L-lysyl-[protein] + malonyl-CoA</text>
        <dbReference type="Rhea" id="RHEA:54728"/>
        <dbReference type="Rhea" id="RHEA-COMP:10505"/>
        <dbReference type="Rhea" id="RHEA-COMP:10506"/>
        <dbReference type="ChEBI" id="CHEBI:57288"/>
        <dbReference type="ChEBI" id="CHEBI:57384"/>
        <dbReference type="ChEBI" id="CHEBI:83144"/>
        <dbReference type="ChEBI" id="CHEBI:83145"/>
        <dbReference type="EC" id="2.1.3.15"/>
    </reaction>
</comment>
<comment type="cofactor">
    <cofactor evidence="1">
        <name>Zn(2+)</name>
        <dbReference type="ChEBI" id="CHEBI:29105"/>
    </cofactor>
    <text evidence="1">Binds 1 zinc ion per subunit.</text>
</comment>
<comment type="pathway">
    <text evidence="1">Lipid metabolism; malonyl-CoA biosynthesis; malonyl-CoA from acetyl-CoA: step 1/1.</text>
</comment>
<comment type="subunit">
    <text evidence="1">Acetyl-CoA carboxylase is a heterohexamer composed of biotin carboxyl carrier protein (AccB), biotin carboxylase (AccC) and two subunits each of ACCase subunit alpha (AccA) and ACCase subunit beta (AccD).</text>
</comment>
<comment type="subcellular location">
    <subcellularLocation>
        <location evidence="1">Cytoplasm</location>
    </subcellularLocation>
</comment>
<comment type="similarity">
    <text evidence="1">Belongs to the AccD/PCCB family.</text>
</comment>
<reference key="1">
    <citation type="submission" date="2008-04" db="EMBL/GenBank/DDBJ databases">
        <title>Complete sequence of Clostridium botulinum strain Eklund.</title>
        <authorList>
            <person name="Brinkac L.M."/>
            <person name="Brown J.L."/>
            <person name="Bruce D."/>
            <person name="Detter C."/>
            <person name="Munk C."/>
            <person name="Smith L.A."/>
            <person name="Smith T.J."/>
            <person name="Sutton G."/>
            <person name="Brettin T.S."/>
        </authorList>
    </citation>
    <scope>NUCLEOTIDE SEQUENCE [LARGE SCALE GENOMIC DNA]</scope>
    <source>
        <strain>Eklund 17B / Type B</strain>
    </source>
</reference>